<evidence type="ECO:0000255" key="1">
    <source>
        <dbReference type="HAMAP-Rule" id="MF_00385"/>
    </source>
</evidence>
<evidence type="ECO:0000305" key="2"/>
<reference key="1">
    <citation type="submission" date="2007-07" db="EMBL/GenBank/DDBJ databases">
        <title>Complete sequence of chromosome of Shewanella baltica OS185.</title>
        <authorList>
            <consortium name="US DOE Joint Genome Institute"/>
            <person name="Copeland A."/>
            <person name="Lucas S."/>
            <person name="Lapidus A."/>
            <person name="Barry K."/>
            <person name="Glavina del Rio T."/>
            <person name="Dalin E."/>
            <person name="Tice H."/>
            <person name="Pitluck S."/>
            <person name="Sims D."/>
            <person name="Brettin T."/>
            <person name="Bruce D."/>
            <person name="Detter J.C."/>
            <person name="Han C."/>
            <person name="Schmutz J."/>
            <person name="Larimer F."/>
            <person name="Land M."/>
            <person name="Hauser L."/>
            <person name="Kyrpides N."/>
            <person name="Mikhailova N."/>
            <person name="Brettar I."/>
            <person name="Rodrigues J."/>
            <person name="Konstantinidis K."/>
            <person name="Tiedje J."/>
            <person name="Richardson P."/>
        </authorList>
    </citation>
    <scope>NUCLEOTIDE SEQUENCE [LARGE SCALE GENOMIC DNA]</scope>
    <source>
        <strain>OS185</strain>
    </source>
</reference>
<sequence length="83" mass="9295">MVTIRLARGGAKKRPFYNIVVADSRNARDGRFIERVGFFNPLARGQEETLRLDLARVEHWVSNGAAATERVAKLIKDARKATA</sequence>
<dbReference type="EMBL" id="CP000753">
    <property type="protein sequence ID" value="ABS07405.1"/>
    <property type="molecule type" value="Genomic_DNA"/>
</dbReference>
<dbReference type="RefSeq" id="WP_006080788.1">
    <property type="nucleotide sequence ID" value="NC_009665.1"/>
</dbReference>
<dbReference type="SMR" id="A6WKR6"/>
<dbReference type="GeneID" id="11771555"/>
<dbReference type="KEGG" id="sbm:Shew185_1254"/>
<dbReference type="HOGENOM" id="CLU_100590_5_1_6"/>
<dbReference type="GO" id="GO:0005737">
    <property type="term" value="C:cytoplasm"/>
    <property type="evidence" value="ECO:0007669"/>
    <property type="project" value="UniProtKB-ARBA"/>
</dbReference>
<dbReference type="GO" id="GO:0015935">
    <property type="term" value="C:small ribosomal subunit"/>
    <property type="evidence" value="ECO:0007669"/>
    <property type="project" value="TreeGrafter"/>
</dbReference>
<dbReference type="GO" id="GO:0003735">
    <property type="term" value="F:structural constituent of ribosome"/>
    <property type="evidence" value="ECO:0007669"/>
    <property type="project" value="InterPro"/>
</dbReference>
<dbReference type="GO" id="GO:0006412">
    <property type="term" value="P:translation"/>
    <property type="evidence" value="ECO:0007669"/>
    <property type="project" value="UniProtKB-UniRule"/>
</dbReference>
<dbReference type="FunFam" id="3.30.1320.10:FF:000001">
    <property type="entry name" value="30S ribosomal protein S16"/>
    <property type="match status" value="1"/>
</dbReference>
<dbReference type="Gene3D" id="3.30.1320.10">
    <property type="match status" value="1"/>
</dbReference>
<dbReference type="HAMAP" id="MF_00385">
    <property type="entry name" value="Ribosomal_bS16"/>
    <property type="match status" value="1"/>
</dbReference>
<dbReference type="InterPro" id="IPR000307">
    <property type="entry name" value="Ribosomal_bS16"/>
</dbReference>
<dbReference type="InterPro" id="IPR020592">
    <property type="entry name" value="Ribosomal_bS16_CS"/>
</dbReference>
<dbReference type="InterPro" id="IPR023803">
    <property type="entry name" value="Ribosomal_bS16_dom_sf"/>
</dbReference>
<dbReference type="NCBIfam" id="TIGR00002">
    <property type="entry name" value="S16"/>
    <property type="match status" value="1"/>
</dbReference>
<dbReference type="PANTHER" id="PTHR12919">
    <property type="entry name" value="30S RIBOSOMAL PROTEIN S16"/>
    <property type="match status" value="1"/>
</dbReference>
<dbReference type="PANTHER" id="PTHR12919:SF20">
    <property type="entry name" value="SMALL RIBOSOMAL SUBUNIT PROTEIN BS16M"/>
    <property type="match status" value="1"/>
</dbReference>
<dbReference type="Pfam" id="PF00886">
    <property type="entry name" value="Ribosomal_S16"/>
    <property type="match status" value="1"/>
</dbReference>
<dbReference type="SUPFAM" id="SSF54565">
    <property type="entry name" value="Ribosomal protein S16"/>
    <property type="match status" value="1"/>
</dbReference>
<dbReference type="PROSITE" id="PS00732">
    <property type="entry name" value="RIBOSOMAL_S16"/>
    <property type="match status" value="1"/>
</dbReference>
<protein>
    <recommendedName>
        <fullName evidence="1">Small ribosomal subunit protein bS16</fullName>
    </recommendedName>
    <alternativeName>
        <fullName evidence="2">30S ribosomal protein S16</fullName>
    </alternativeName>
</protein>
<feature type="chain" id="PRO_1000049344" description="Small ribosomal subunit protein bS16">
    <location>
        <begin position="1"/>
        <end position="83"/>
    </location>
</feature>
<comment type="similarity">
    <text evidence="1">Belongs to the bacterial ribosomal protein bS16 family.</text>
</comment>
<name>RS16_SHEB8</name>
<keyword id="KW-0687">Ribonucleoprotein</keyword>
<keyword id="KW-0689">Ribosomal protein</keyword>
<gene>
    <name evidence="1" type="primary">rpsP</name>
    <name type="ordered locus">Shew185_1254</name>
</gene>
<accession>A6WKR6</accession>
<organism>
    <name type="scientific">Shewanella baltica (strain OS185)</name>
    <dbReference type="NCBI Taxonomy" id="402882"/>
    <lineage>
        <taxon>Bacteria</taxon>
        <taxon>Pseudomonadati</taxon>
        <taxon>Pseudomonadota</taxon>
        <taxon>Gammaproteobacteria</taxon>
        <taxon>Alteromonadales</taxon>
        <taxon>Shewanellaceae</taxon>
        <taxon>Shewanella</taxon>
    </lineage>
</organism>
<proteinExistence type="inferred from homology"/>